<reference key="1">
    <citation type="journal article" date="2000" name="J. Prakt. Chem.">
        <title>Complete structural characterization of a chitin-binding lectin from mistletoe extracts.</title>
        <authorList>
            <person name="Voelter W."/>
            <person name="Wacker R."/>
            <person name="Franz M."/>
            <person name="Maier T."/>
            <person name="Stoeva S."/>
        </authorList>
    </citation>
    <scope>PROTEIN SEQUENCE</scope>
    <scope>MASS SPECTROMETRY</scope>
    <source>
        <tissue>Leaf</tissue>
    </source>
</reference>
<evidence type="ECO:0000255" key="1">
    <source>
        <dbReference type="PROSITE-ProRule" id="PRU00261"/>
    </source>
</evidence>
<evidence type="ECO:0000269" key="2">
    <source ref="1"/>
</evidence>
<protein>
    <recommendedName>
        <fullName>Chitin-binding lectin</fullName>
    </recommendedName>
</protein>
<comment type="function">
    <text>Chitin-binding lectin which is specific for N-acetylglucosamine oligomers.</text>
</comment>
<comment type="subunit">
    <text>Homodimer; disulfide-linked.</text>
</comment>
<comment type="mass spectrometry">
    <text>Homodimer.</text>
</comment>
<comment type="miscellaneous">
    <text>On the 2D-gel its MW is: 10 kDa.</text>
</comment>
<dbReference type="SMR" id="P81859"/>
<dbReference type="CAZy" id="CBM18">
    <property type="family name" value="Carbohydrate-Binding Module Family 18"/>
</dbReference>
<dbReference type="GO" id="GO:0030246">
    <property type="term" value="F:carbohydrate binding"/>
    <property type="evidence" value="ECO:0007669"/>
    <property type="project" value="UniProtKB-KW"/>
</dbReference>
<dbReference type="GO" id="GO:0008061">
    <property type="term" value="F:chitin binding"/>
    <property type="evidence" value="ECO:0007669"/>
    <property type="project" value="UniProtKB-KW"/>
</dbReference>
<dbReference type="CDD" id="cd00035">
    <property type="entry name" value="ChtBD1"/>
    <property type="match status" value="1"/>
</dbReference>
<dbReference type="Gene3D" id="3.30.60.10">
    <property type="entry name" value="Endochitinase-like"/>
    <property type="match status" value="1"/>
</dbReference>
<dbReference type="InterPro" id="IPR001002">
    <property type="entry name" value="Chitin-bd_1"/>
</dbReference>
<dbReference type="InterPro" id="IPR018371">
    <property type="entry name" value="Chitin-binding_1_CS"/>
</dbReference>
<dbReference type="InterPro" id="IPR036861">
    <property type="entry name" value="Endochitinase-like_sf"/>
</dbReference>
<dbReference type="Pfam" id="PF00187">
    <property type="entry name" value="Chitin_bind_1"/>
    <property type="match status" value="1"/>
</dbReference>
<dbReference type="PRINTS" id="PR00451">
    <property type="entry name" value="CHITINBINDNG"/>
</dbReference>
<dbReference type="SMART" id="SM00270">
    <property type="entry name" value="ChtBD1"/>
    <property type="match status" value="1"/>
</dbReference>
<dbReference type="SUPFAM" id="SSF57016">
    <property type="entry name" value="Plant lectins/antimicrobial peptides"/>
    <property type="match status" value="1"/>
</dbReference>
<dbReference type="PROSITE" id="PS00026">
    <property type="entry name" value="CHIT_BIND_I_1"/>
    <property type="match status" value="1"/>
</dbReference>
<dbReference type="PROSITE" id="PS50941">
    <property type="entry name" value="CHIT_BIND_I_2"/>
    <property type="match status" value="1"/>
</dbReference>
<sequence>IDHRCGREATPPGKLCNDGRCCSQWGWCGTTQAYCSGKCQSQCDCNRDL</sequence>
<organism>
    <name type="scientific">Viscum album</name>
    <name type="common">European mistletoe</name>
    <dbReference type="NCBI Taxonomy" id="3972"/>
    <lineage>
        <taxon>Eukaryota</taxon>
        <taxon>Viridiplantae</taxon>
        <taxon>Streptophyta</taxon>
        <taxon>Embryophyta</taxon>
        <taxon>Tracheophyta</taxon>
        <taxon>Spermatophyta</taxon>
        <taxon>Magnoliopsida</taxon>
        <taxon>eudicotyledons</taxon>
        <taxon>Gunneridae</taxon>
        <taxon>Pentapetalae</taxon>
        <taxon>Santalales</taxon>
        <taxon>Viscaceae</taxon>
        <taxon>Viscum</taxon>
    </lineage>
</organism>
<name>CBLE_VISAL</name>
<proteinExistence type="evidence at protein level"/>
<keyword id="KW-0147">Chitin-binding</keyword>
<keyword id="KW-0903">Direct protein sequencing</keyword>
<keyword id="KW-1015">Disulfide bond</keyword>
<keyword id="KW-0430">Lectin</keyword>
<feature type="chain" id="PRO_0000124814" description="Chitin-binding lectin">
    <location>
        <begin position="1"/>
        <end position="49"/>
    </location>
</feature>
<feature type="domain" description="Chitin-binding type-1" evidence="1">
    <location>
        <begin position="2"/>
        <end position="45"/>
    </location>
</feature>
<feature type="disulfide bond" evidence="1">
    <location>
        <begin position="5"/>
        <end position="22"/>
    </location>
</feature>
<feature type="disulfide bond" evidence="1">
    <location>
        <begin position="16"/>
        <end position="28"/>
    </location>
</feature>
<feature type="disulfide bond" evidence="1">
    <location>
        <begin position="21"/>
        <end position="35"/>
    </location>
</feature>
<feature type="disulfide bond" evidence="1">
    <location>
        <begin position="39"/>
        <end position="43"/>
    </location>
</feature>
<feature type="disulfide bond" description="Interchain" evidence="1">
    <location>
        <position position="45"/>
    </location>
</feature>
<accession>P81859</accession>